<comment type="function">
    <text evidence="1">Component of the nascent polypeptide-associated complex (NAC), a dynamic component of the ribosomal exit tunnel, protecting the emerging polypeptides from interaction with other cytoplasmic proteins to ensure appropriate nascent protein targeting. The NAC complex also promotes mitochondrial protein import by enhancing productive ribosome interactions with the outer mitochondrial membrane and blocks the inappropriate interaction of ribosomes translating non-secretory nascent polypeptides with translocation sites in the membrane of the endoplasmic reticulum. EGD2 may also be involved in transcription regulation (By similarity).</text>
</comment>
<comment type="subunit">
    <text evidence="1">Part of the nascent polypeptide-associated complex (NAC), consisting of EGD2 and EGD1. NAC associates with ribosomes via EGD1 (By similarity).</text>
</comment>
<comment type="subcellular location">
    <subcellularLocation>
        <location evidence="1">Cytoplasm</location>
    </subcellularLocation>
    <subcellularLocation>
        <location evidence="1">Nucleus</location>
    </subcellularLocation>
    <text evidence="1">Predominantly cytoplasmic, may also transiently localize to the nucleus.</text>
</comment>
<comment type="similarity">
    <text evidence="4">Belongs to the NAC-alpha family.</text>
</comment>
<evidence type="ECO:0000250" key="1"/>
<evidence type="ECO:0000255" key="2">
    <source>
        <dbReference type="PROSITE-ProRule" id="PRU00507"/>
    </source>
</evidence>
<evidence type="ECO:0000256" key="3">
    <source>
        <dbReference type="SAM" id="MobiDB-lite"/>
    </source>
</evidence>
<evidence type="ECO:0000305" key="4"/>
<protein>
    <recommendedName>
        <fullName>Nascent polypeptide-associated complex subunit alpha</fullName>
        <shortName>NAC-alpha</shortName>
    </recommendedName>
    <alternativeName>
        <fullName>Alpha-NAC</fullName>
    </alternativeName>
</protein>
<dbReference type="EMBL" id="CR382122">
    <property type="protein sequence ID" value="CAH02116.1"/>
    <property type="molecule type" value="Genomic_DNA"/>
</dbReference>
<dbReference type="RefSeq" id="XP_451723.1">
    <property type="nucleotide sequence ID" value="XM_451723.1"/>
</dbReference>
<dbReference type="SMR" id="Q6CWG6"/>
<dbReference type="FunCoup" id="Q6CWG6">
    <property type="interactions" value="610"/>
</dbReference>
<dbReference type="STRING" id="284590.Q6CWG6"/>
<dbReference type="PaxDb" id="284590-Q6CWG6"/>
<dbReference type="KEGG" id="kla:KLLA0_B04290g"/>
<dbReference type="eggNOG" id="KOG2239">
    <property type="taxonomic scope" value="Eukaryota"/>
</dbReference>
<dbReference type="HOGENOM" id="CLU_057806_2_1_1"/>
<dbReference type="InParanoid" id="Q6CWG6"/>
<dbReference type="OMA" id="SQKMIFA"/>
<dbReference type="Proteomes" id="UP000000598">
    <property type="component" value="Chromosome B"/>
</dbReference>
<dbReference type="GO" id="GO:0005854">
    <property type="term" value="C:nascent polypeptide-associated complex"/>
    <property type="evidence" value="ECO:0007669"/>
    <property type="project" value="InterPro"/>
</dbReference>
<dbReference type="GO" id="GO:0005634">
    <property type="term" value="C:nucleus"/>
    <property type="evidence" value="ECO:0007669"/>
    <property type="project" value="UniProtKB-SubCell"/>
</dbReference>
<dbReference type="GO" id="GO:0015031">
    <property type="term" value="P:protein transport"/>
    <property type="evidence" value="ECO:0007669"/>
    <property type="project" value="UniProtKB-KW"/>
</dbReference>
<dbReference type="CDD" id="cd22054">
    <property type="entry name" value="NAC_NACA"/>
    <property type="match status" value="1"/>
</dbReference>
<dbReference type="CDD" id="cd14358">
    <property type="entry name" value="UBA_NAC_euk"/>
    <property type="match status" value="1"/>
</dbReference>
<dbReference type="FunFam" id="2.20.70.30:FF:000002">
    <property type="entry name" value="Nascent polypeptide-associated complex (NAC), alpha subunit"/>
    <property type="match status" value="1"/>
</dbReference>
<dbReference type="Gene3D" id="1.10.8.10">
    <property type="entry name" value="DNA helicase RuvA subunit, C-terminal domain"/>
    <property type="match status" value="1"/>
</dbReference>
<dbReference type="Gene3D" id="2.20.70.30">
    <property type="entry name" value="Nascent polypeptide-associated complex domain"/>
    <property type="match status" value="1"/>
</dbReference>
<dbReference type="InterPro" id="IPR016641">
    <property type="entry name" value="EGD2/NACA0like"/>
</dbReference>
<dbReference type="InterPro" id="IPR044034">
    <property type="entry name" value="NAC-like_UBA"/>
</dbReference>
<dbReference type="InterPro" id="IPR038187">
    <property type="entry name" value="NAC_A/B_dom_sf"/>
</dbReference>
<dbReference type="InterPro" id="IPR002715">
    <property type="entry name" value="Nas_poly-pep-assoc_cplx_dom"/>
</dbReference>
<dbReference type="PANTHER" id="PTHR21713">
    <property type="entry name" value="NASCENT POLYPEPTIDE ASSOCIATED COMPLEX ALPHA SUBUNIT-RELATED"/>
    <property type="match status" value="1"/>
</dbReference>
<dbReference type="Pfam" id="PF01849">
    <property type="entry name" value="NAC"/>
    <property type="match status" value="1"/>
</dbReference>
<dbReference type="Pfam" id="PF19026">
    <property type="entry name" value="UBA_HYPK"/>
    <property type="match status" value="1"/>
</dbReference>
<dbReference type="PIRSF" id="PIRSF015901">
    <property type="entry name" value="NAC_alpha"/>
    <property type="match status" value="1"/>
</dbReference>
<dbReference type="SMART" id="SM01407">
    <property type="entry name" value="NAC"/>
    <property type="match status" value="1"/>
</dbReference>
<dbReference type="PROSITE" id="PS51151">
    <property type="entry name" value="NAC_AB"/>
    <property type="match status" value="1"/>
</dbReference>
<gene>
    <name type="primary">EGD2</name>
    <name type="ordered locus">KLLA0B04290g</name>
</gene>
<keyword id="KW-0963">Cytoplasm</keyword>
<keyword id="KW-0539">Nucleus</keyword>
<keyword id="KW-0653">Protein transport</keyword>
<keyword id="KW-1185">Reference proteome</keyword>
<keyword id="KW-0813">Transport</keyword>
<sequence length="176" mass="18860">MSEIAQDSNVSIFSKNEKKARELILKLGLKPIQGVSRVTFKKKDGQIFAIDRPEVYKSQGGNFVVFGEAKVDDFTQRLAKAQESLQQNEGVLPAGQDAVSKDPQSIQADMQAAADSATDKPSADDAVDDAEVDETGLNADDIELVMQQAGVPRAKAAKALKEHDSDIVNAIMALSG</sequence>
<reference key="1">
    <citation type="journal article" date="2004" name="Nature">
        <title>Genome evolution in yeasts.</title>
        <authorList>
            <person name="Dujon B."/>
            <person name="Sherman D."/>
            <person name="Fischer G."/>
            <person name="Durrens P."/>
            <person name="Casaregola S."/>
            <person name="Lafontaine I."/>
            <person name="de Montigny J."/>
            <person name="Marck C."/>
            <person name="Neuveglise C."/>
            <person name="Talla E."/>
            <person name="Goffard N."/>
            <person name="Frangeul L."/>
            <person name="Aigle M."/>
            <person name="Anthouard V."/>
            <person name="Babour A."/>
            <person name="Barbe V."/>
            <person name="Barnay S."/>
            <person name="Blanchin S."/>
            <person name="Beckerich J.-M."/>
            <person name="Beyne E."/>
            <person name="Bleykasten C."/>
            <person name="Boisrame A."/>
            <person name="Boyer J."/>
            <person name="Cattolico L."/>
            <person name="Confanioleri F."/>
            <person name="de Daruvar A."/>
            <person name="Despons L."/>
            <person name="Fabre E."/>
            <person name="Fairhead C."/>
            <person name="Ferry-Dumazet H."/>
            <person name="Groppi A."/>
            <person name="Hantraye F."/>
            <person name="Hennequin C."/>
            <person name="Jauniaux N."/>
            <person name="Joyet P."/>
            <person name="Kachouri R."/>
            <person name="Kerrest A."/>
            <person name="Koszul R."/>
            <person name="Lemaire M."/>
            <person name="Lesur I."/>
            <person name="Ma L."/>
            <person name="Muller H."/>
            <person name="Nicaud J.-M."/>
            <person name="Nikolski M."/>
            <person name="Oztas S."/>
            <person name="Ozier-Kalogeropoulos O."/>
            <person name="Pellenz S."/>
            <person name="Potier S."/>
            <person name="Richard G.-F."/>
            <person name="Straub M.-L."/>
            <person name="Suleau A."/>
            <person name="Swennen D."/>
            <person name="Tekaia F."/>
            <person name="Wesolowski-Louvel M."/>
            <person name="Westhof E."/>
            <person name="Wirth B."/>
            <person name="Zeniou-Meyer M."/>
            <person name="Zivanovic Y."/>
            <person name="Bolotin-Fukuhara M."/>
            <person name="Thierry A."/>
            <person name="Bouchier C."/>
            <person name="Caudron B."/>
            <person name="Scarpelli C."/>
            <person name="Gaillardin C."/>
            <person name="Weissenbach J."/>
            <person name="Wincker P."/>
            <person name="Souciet J.-L."/>
        </authorList>
    </citation>
    <scope>NUCLEOTIDE SEQUENCE [LARGE SCALE GENOMIC DNA]</scope>
    <source>
        <strain>ATCC 8585 / CBS 2359 / DSM 70799 / NBRC 1267 / NRRL Y-1140 / WM37</strain>
    </source>
</reference>
<organism>
    <name type="scientific">Kluyveromyces lactis (strain ATCC 8585 / CBS 2359 / DSM 70799 / NBRC 1267 / NRRL Y-1140 / WM37)</name>
    <name type="common">Yeast</name>
    <name type="synonym">Candida sphaerica</name>
    <dbReference type="NCBI Taxonomy" id="284590"/>
    <lineage>
        <taxon>Eukaryota</taxon>
        <taxon>Fungi</taxon>
        <taxon>Dikarya</taxon>
        <taxon>Ascomycota</taxon>
        <taxon>Saccharomycotina</taxon>
        <taxon>Saccharomycetes</taxon>
        <taxon>Saccharomycetales</taxon>
        <taxon>Saccharomycetaceae</taxon>
        <taxon>Kluyveromyces</taxon>
    </lineage>
</organism>
<proteinExistence type="inferred from homology"/>
<accession>Q6CWG6</accession>
<name>NACA_KLULA</name>
<feature type="chain" id="PRO_0000273492" description="Nascent polypeptide-associated complex subunit alpha">
    <location>
        <begin position="1"/>
        <end position="176"/>
    </location>
</feature>
<feature type="domain" description="NAC-A/B" evidence="2">
    <location>
        <begin position="14"/>
        <end position="78"/>
    </location>
</feature>
<feature type="domain" description="UBA">
    <location>
        <begin position="137"/>
        <end position="176"/>
    </location>
</feature>
<feature type="region of interest" description="Disordered" evidence="3">
    <location>
        <begin position="85"/>
        <end position="127"/>
    </location>
</feature>